<dbReference type="EC" id="1.14.13.-" evidence="3"/>
<dbReference type="EMBL" id="DAAA02030376">
    <property type="status" value="NOT_ANNOTATED_CDS"/>
    <property type="molecule type" value="Genomic_DNA"/>
</dbReference>
<dbReference type="RefSeq" id="NP_001179722.1">
    <property type="nucleotide sequence ID" value="NM_001192793.2"/>
</dbReference>
<dbReference type="RefSeq" id="XP_024854843.1">
    <property type="nucleotide sequence ID" value="XM_024999075.2"/>
</dbReference>
<dbReference type="RefSeq" id="XP_059747425.1">
    <property type="nucleotide sequence ID" value="XM_059891442.1"/>
</dbReference>
<dbReference type="SMR" id="E1BHJ4"/>
<dbReference type="FunCoup" id="E1BHJ4">
    <property type="interactions" value="44"/>
</dbReference>
<dbReference type="STRING" id="9913.ENSBTAP00000016198"/>
<dbReference type="PaxDb" id="9913-ENSBTAP00000016198"/>
<dbReference type="Ensembl" id="ENSBTAT00000016198.6">
    <property type="protein sequence ID" value="ENSBTAP00000016198.4"/>
    <property type="gene ID" value="ENSBTAG00000012212.6"/>
</dbReference>
<dbReference type="GeneID" id="540868"/>
<dbReference type="KEGG" id="bta:540868"/>
<dbReference type="CTD" id="56603"/>
<dbReference type="VEuPathDB" id="HostDB:ENSBTAG00000012212"/>
<dbReference type="eggNOG" id="KOG0157">
    <property type="taxonomic scope" value="Eukaryota"/>
</dbReference>
<dbReference type="GeneTree" id="ENSGT00800000124060"/>
<dbReference type="HOGENOM" id="CLU_001570_15_6_1"/>
<dbReference type="InParanoid" id="E1BHJ4"/>
<dbReference type="OMA" id="WDGQFVN"/>
<dbReference type="OrthoDB" id="1372046at2759"/>
<dbReference type="TreeFam" id="TF105093"/>
<dbReference type="Reactome" id="R-BTA-211916">
    <property type="pathway name" value="Vitamins"/>
</dbReference>
<dbReference type="Reactome" id="R-BTA-5365859">
    <property type="pathway name" value="RA biosynthesis pathway"/>
</dbReference>
<dbReference type="Proteomes" id="UP000009136">
    <property type="component" value="Chromosome 11"/>
</dbReference>
<dbReference type="Bgee" id="ENSBTAG00000012212">
    <property type="expression patterns" value="Expressed in thymus and 96 other cell types or tissues"/>
</dbReference>
<dbReference type="GO" id="GO:0005789">
    <property type="term" value="C:endoplasmic reticulum membrane"/>
    <property type="evidence" value="ECO:0007669"/>
    <property type="project" value="UniProtKB-SubCell"/>
</dbReference>
<dbReference type="GO" id="GO:0062183">
    <property type="term" value="F:all-trans retinoic acid 18-hydroxylase activity"/>
    <property type="evidence" value="ECO:0007669"/>
    <property type="project" value="RHEA"/>
</dbReference>
<dbReference type="GO" id="GO:0020037">
    <property type="term" value="F:heme binding"/>
    <property type="evidence" value="ECO:0007669"/>
    <property type="project" value="InterPro"/>
</dbReference>
<dbReference type="GO" id="GO:0005506">
    <property type="term" value="F:iron ion binding"/>
    <property type="evidence" value="ECO:0007669"/>
    <property type="project" value="InterPro"/>
</dbReference>
<dbReference type="GO" id="GO:0004497">
    <property type="term" value="F:monooxygenase activity"/>
    <property type="evidence" value="ECO:0000318"/>
    <property type="project" value="GO_Central"/>
</dbReference>
<dbReference type="GO" id="GO:0016709">
    <property type="term" value="F:oxidoreductase activity, acting on paired donors, with incorporation or reduction of molecular oxygen, NAD(P)H as one donor, and incorporation of one atom of oxygen"/>
    <property type="evidence" value="ECO:0000250"/>
    <property type="project" value="UniProtKB"/>
</dbReference>
<dbReference type="GO" id="GO:0008401">
    <property type="term" value="F:retinoic acid 4-hydroxylase activity"/>
    <property type="evidence" value="ECO:0000250"/>
    <property type="project" value="UniProtKB"/>
</dbReference>
<dbReference type="GO" id="GO:0001972">
    <property type="term" value="F:retinoic acid binding"/>
    <property type="evidence" value="ECO:0007669"/>
    <property type="project" value="Ensembl"/>
</dbReference>
<dbReference type="GO" id="GO:0060349">
    <property type="term" value="P:bone morphogenesis"/>
    <property type="evidence" value="ECO:0000250"/>
    <property type="project" value="UniProtKB"/>
</dbReference>
<dbReference type="GO" id="GO:0001709">
    <property type="term" value="P:cell fate determination"/>
    <property type="evidence" value="ECO:0007669"/>
    <property type="project" value="Ensembl"/>
</dbReference>
<dbReference type="GO" id="GO:0071300">
    <property type="term" value="P:cellular response to retinoic acid"/>
    <property type="evidence" value="ECO:0007669"/>
    <property type="project" value="Ensembl"/>
</dbReference>
<dbReference type="GO" id="GO:0007417">
    <property type="term" value="P:central nervous system development"/>
    <property type="evidence" value="ECO:0000318"/>
    <property type="project" value="GO_Central"/>
</dbReference>
<dbReference type="GO" id="GO:0070268">
    <property type="term" value="P:cornification"/>
    <property type="evidence" value="ECO:0007669"/>
    <property type="project" value="Ensembl"/>
</dbReference>
<dbReference type="GO" id="GO:0030326">
    <property type="term" value="P:embryonic limb morphogenesis"/>
    <property type="evidence" value="ECO:0007669"/>
    <property type="project" value="Ensembl"/>
</dbReference>
<dbReference type="GO" id="GO:0061436">
    <property type="term" value="P:establishment of skin barrier"/>
    <property type="evidence" value="ECO:0007669"/>
    <property type="project" value="Ensembl"/>
</dbReference>
<dbReference type="GO" id="GO:0001768">
    <property type="term" value="P:establishment of T cell polarity"/>
    <property type="evidence" value="ECO:0007669"/>
    <property type="project" value="Ensembl"/>
</dbReference>
<dbReference type="GO" id="GO:0006954">
    <property type="term" value="P:inflammatory response"/>
    <property type="evidence" value="ECO:0007669"/>
    <property type="project" value="Ensembl"/>
</dbReference>
<dbReference type="GO" id="GO:0007140">
    <property type="term" value="P:male meiotic nuclear division"/>
    <property type="evidence" value="ECO:0007669"/>
    <property type="project" value="Ensembl"/>
</dbReference>
<dbReference type="GO" id="GO:0048387">
    <property type="term" value="P:negative regulation of retinoic acid receptor signaling pathway"/>
    <property type="evidence" value="ECO:0007669"/>
    <property type="project" value="Ensembl"/>
</dbReference>
<dbReference type="GO" id="GO:0010628">
    <property type="term" value="P:positive regulation of gene expression"/>
    <property type="evidence" value="ECO:0007669"/>
    <property type="project" value="Ensembl"/>
</dbReference>
<dbReference type="GO" id="GO:2001037">
    <property type="term" value="P:positive regulation of tongue muscle cell differentiation"/>
    <property type="evidence" value="ECO:0007669"/>
    <property type="project" value="Ensembl"/>
</dbReference>
<dbReference type="GO" id="GO:0009954">
    <property type="term" value="P:proximal/distal pattern formation"/>
    <property type="evidence" value="ECO:0007669"/>
    <property type="project" value="Ensembl"/>
</dbReference>
<dbReference type="GO" id="GO:0045580">
    <property type="term" value="P:regulation of T cell differentiation"/>
    <property type="evidence" value="ECO:0007669"/>
    <property type="project" value="Ensembl"/>
</dbReference>
<dbReference type="GO" id="GO:0034653">
    <property type="term" value="P:retinoic acid catabolic process"/>
    <property type="evidence" value="ECO:0000250"/>
    <property type="project" value="UniProtKB"/>
</dbReference>
<dbReference type="GO" id="GO:0042573">
    <property type="term" value="P:retinoic acid metabolic process"/>
    <property type="evidence" value="ECO:0000250"/>
    <property type="project" value="UniProtKB"/>
</dbReference>
<dbReference type="GO" id="GO:0048384">
    <property type="term" value="P:retinoic acid receptor signaling pathway"/>
    <property type="evidence" value="ECO:0007669"/>
    <property type="project" value="Ensembl"/>
</dbReference>
<dbReference type="GO" id="GO:0007283">
    <property type="term" value="P:spermatogenesis"/>
    <property type="evidence" value="ECO:0007669"/>
    <property type="project" value="Ensembl"/>
</dbReference>
<dbReference type="GO" id="GO:0043587">
    <property type="term" value="P:tongue morphogenesis"/>
    <property type="evidence" value="ECO:0007669"/>
    <property type="project" value="Ensembl"/>
</dbReference>
<dbReference type="GO" id="GO:0006805">
    <property type="term" value="P:xenobiotic metabolic process"/>
    <property type="evidence" value="ECO:0000250"/>
    <property type="project" value="UniProtKB"/>
</dbReference>
<dbReference type="CDD" id="cd20637">
    <property type="entry name" value="CYP26B1"/>
    <property type="match status" value="1"/>
</dbReference>
<dbReference type="FunFam" id="1.10.630.10:FF:000009">
    <property type="entry name" value="Cytochrome P450 26B1 isoform 1"/>
    <property type="match status" value="1"/>
</dbReference>
<dbReference type="Gene3D" id="1.10.630.10">
    <property type="entry name" value="Cytochrome P450"/>
    <property type="match status" value="1"/>
</dbReference>
<dbReference type="InterPro" id="IPR001128">
    <property type="entry name" value="Cyt_P450"/>
</dbReference>
<dbReference type="InterPro" id="IPR017972">
    <property type="entry name" value="Cyt_P450_CS"/>
</dbReference>
<dbReference type="InterPro" id="IPR002403">
    <property type="entry name" value="Cyt_P450_E_grp-IV"/>
</dbReference>
<dbReference type="InterPro" id="IPR036396">
    <property type="entry name" value="Cyt_P450_sf"/>
</dbReference>
<dbReference type="PANTHER" id="PTHR24286">
    <property type="entry name" value="CYTOCHROME P450 26"/>
    <property type="match status" value="1"/>
</dbReference>
<dbReference type="PANTHER" id="PTHR24286:SF177">
    <property type="entry name" value="CYTOCHROME P450 26B1"/>
    <property type="match status" value="1"/>
</dbReference>
<dbReference type="Pfam" id="PF00067">
    <property type="entry name" value="p450"/>
    <property type="match status" value="1"/>
</dbReference>
<dbReference type="PRINTS" id="PR00465">
    <property type="entry name" value="EP450IV"/>
</dbReference>
<dbReference type="PRINTS" id="PR00385">
    <property type="entry name" value="P450"/>
</dbReference>
<dbReference type="SUPFAM" id="SSF48264">
    <property type="entry name" value="Cytochrome P450"/>
    <property type="match status" value="1"/>
</dbReference>
<dbReference type="PROSITE" id="PS00086">
    <property type="entry name" value="CYTOCHROME_P450"/>
    <property type="match status" value="1"/>
</dbReference>
<name>CP26B_BOVIN</name>
<protein>
    <recommendedName>
        <fullName>Cytochrome P450 26B1</fullName>
        <ecNumber evidence="3">1.14.13.-</ecNumber>
    </recommendedName>
</protein>
<evidence type="ECO:0000250" key="1">
    <source>
        <dbReference type="UniProtKB" id="O43174"/>
    </source>
</evidence>
<evidence type="ECO:0000250" key="2">
    <source>
        <dbReference type="UniProtKB" id="Q811W2"/>
    </source>
</evidence>
<evidence type="ECO:0000250" key="3">
    <source>
        <dbReference type="UniProtKB" id="Q9NR63"/>
    </source>
</evidence>
<evidence type="ECO:0000250" key="4">
    <source>
        <dbReference type="UniProtKB" id="Q9Y6A2"/>
    </source>
</evidence>
<evidence type="ECO:0000255" key="5"/>
<evidence type="ECO:0000305" key="6"/>
<gene>
    <name type="primary">CYP26B1</name>
</gene>
<organism>
    <name type="scientific">Bos taurus</name>
    <name type="common">Bovine</name>
    <dbReference type="NCBI Taxonomy" id="9913"/>
    <lineage>
        <taxon>Eukaryota</taxon>
        <taxon>Metazoa</taxon>
        <taxon>Chordata</taxon>
        <taxon>Craniata</taxon>
        <taxon>Vertebrata</taxon>
        <taxon>Euteleostomi</taxon>
        <taxon>Mammalia</taxon>
        <taxon>Eutheria</taxon>
        <taxon>Laurasiatheria</taxon>
        <taxon>Artiodactyla</taxon>
        <taxon>Ruminantia</taxon>
        <taxon>Pecora</taxon>
        <taxon>Bovidae</taxon>
        <taxon>Bovinae</taxon>
        <taxon>Bos</taxon>
    </lineage>
</organism>
<proteinExistence type="inferred from homology"/>
<keyword id="KW-0256">Endoplasmic reticulum</keyword>
<keyword id="KW-0349">Heme</keyword>
<keyword id="KW-0408">Iron</keyword>
<keyword id="KW-0443">Lipid metabolism</keyword>
<keyword id="KW-0472">Membrane</keyword>
<keyword id="KW-0479">Metal-binding</keyword>
<keyword id="KW-0492">Microsome</keyword>
<keyword id="KW-0503">Monooxygenase</keyword>
<keyword id="KW-0560">Oxidoreductase</keyword>
<keyword id="KW-1185">Reference proteome</keyword>
<accession>E1BHJ4</accession>
<comment type="function">
    <text evidence="2 3">A cytochrome P450 monooxygenase involved in the metabolism of retinoates (RAs), the active metabolites of vitamin A, and critical signaling molecules in animals (By similarity). RAs exist as at least four different isomers: all-trans-RA (atRA), 9-cis-RA, 13-cis-RA, and 9,13-dicis-RA, where atRA is considered to be the biologically active isomer, although 9-cis-RA and 13-cis-RA also have activity (By similarity). Catalyzes the hydroxylation of atRA primarily at C-4 and C-18, thereby contributing to the regulation of atRA homeostasis and signaling (By similarity). Hydroxylation of atRA limits its biological activity and initiates a degradative process leading to its eventual elimination (By similarity). Involved in the convertion of atRA to all-trans-4-oxo-RA. Can oxidize all-trans-13,14-dihydroretinoate (DRA) to metabolites which could include all-trans-4-oxo-DRA, all-trans-4-hydroxy-DRA, all-trans-5,8-epoxy-DRA, and all-trans-18-hydroxy-DRA (By similarity). Shows preference for the following substrates: atRA &gt; 9-cis-RA &gt; 13-cis-RA (By similarity). Plays a central role in germ cell development: acts by degrading RAs in the developing testis, preventing STRA8 expression, thereby leading to delay of meiosis. Required for the maintenance of the undifferentiated state of male germ cells during embryonic development in Sertoli cells, inducing arrest in G0 phase of the cell cycle and preventing meiotic entry. Plays a role in skeletal development, both at the level of patterning and in the ossification of bone and the establishment of some synovial joints. Essential for postnatal survival (By similarity).</text>
</comment>
<comment type="function">
    <text evidence="3">Also has a significant activity in oxidation of tazarotenic acid and may therefore metabolize that xenobiotic in vivo.</text>
</comment>
<comment type="catalytic activity">
    <reaction evidence="2">
        <text>all-trans-retinoate + reduced [NADPH--hemoprotein reductase] + O2 = all-trans-4-hydroxyretinoate + oxidized [NADPH--hemoprotein reductase] + H2O + H(+)</text>
        <dbReference type="Rhea" id="RHEA:51984"/>
        <dbReference type="Rhea" id="RHEA-COMP:11964"/>
        <dbReference type="Rhea" id="RHEA-COMP:11965"/>
        <dbReference type="ChEBI" id="CHEBI:15377"/>
        <dbReference type="ChEBI" id="CHEBI:15378"/>
        <dbReference type="ChEBI" id="CHEBI:15379"/>
        <dbReference type="ChEBI" id="CHEBI:35291"/>
        <dbReference type="ChEBI" id="CHEBI:57618"/>
        <dbReference type="ChEBI" id="CHEBI:58210"/>
        <dbReference type="ChEBI" id="CHEBI:134178"/>
    </reaction>
    <physiologicalReaction direction="left-to-right" evidence="2">
        <dbReference type="Rhea" id="RHEA:51985"/>
    </physiologicalReaction>
</comment>
<comment type="catalytic activity">
    <reaction evidence="2">
        <text>all-trans-retinoate + reduced [NADPH--hemoprotein reductase] + O2 = all-trans-18-hydroxyretinoate + oxidized [NADPH--hemoprotein reductase] + H2O + H(+)</text>
        <dbReference type="Rhea" id="RHEA:55856"/>
        <dbReference type="Rhea" id="RHEA-COMP:11964"/>
        <dbReference type="Rhea" id="RHEA-COMP:11965"/>
        <dbReference type="ChEBI" id="CHEBI:15377"/>
        <dbReference type="ChEBI" id="CHEBI:15378"/>
        <dbReference type="ChEBI" id="CHEBI:15379"/>
        <dbReference type="ChEBI" id="CHEBI:35291"/>
        <dbReference type="ChEBI" id="CHEBI:57618"/>
        <dbReference type="ChEBI" id="CHEBI:58210"/>
        <dbReference type="ChEBI" id="CHEBI:139258"/>
    </reaction>
    <physiologicalReaction direction="left-to-right" evidence="2">
        <dbReference type="Rhea" id="RHEA:55857"/>
    </physiologicalReaction>
</comment>
<comment type="cofactor">
    <cofactor evidence="4">
        <name>heme</name>
        <dbReference type="ChEBI" id="CHEBI:30413"/>
    </cofactor>
</comment>
<comment type="subcellular location">
    <subcellularLocation>
        <location evidence="1">Endoplasmic reticulum membrane</location>
        <topology evidence="1">Peripheral membrane protein</topology>
    </subcellularLocation>
    <subcellularLocation>
        <location evidence="1">Microsome membrane</location>
        <topology evidence="1">Peripheral membrane protein</topology>
    </subcellularLocation>
</comment>
<comment type="similarity">
    <text evidence="6">Belongs to the cytochrome P450 family.</text>
</comment>
<feature type="chain" id="PRO_0000416904" description="Cytochrome P450 26B1">
    <location>
        <begin position="1"/>
        <end position="512"/>
    </location>
</feature>
<feature type="binding site" description="axial binding residue" evidence="5">
    <location>
        <position position="441"/>
    </location>
    <ligand>
        <name>heme</name>
        <dbReference type="ChEBI" id="CHEBI:30413"/>
    </ligand>
    <ligandPart>
        <name>Fe</name>
        <dbReference type="ChEBI" id="CHEBI:18248"/>
    </ligandPart>
</feature>
<sequence>MLFEGLELVSALATLAACLVSVTLLLAVSQQLWQLRWAATRDKSCKLPIPKGSMGFPLIGETGHWLLQGSGFQSSRREKYGNVFKTHLLGRPLIRVTGAENVRKILMGEHHLVSTEWPRSTRMLLGPNTVSNSIGDIHRNKRKVFSKIFSHEALESYLPKIQLVIQDTLRAWSSHPEAINVYQEAQKLTFRMAIRVLLGFSIPEEDLGHLFEVYQQFVENVFSLPVDLPFSGYRRGIQARQTLQKGLEKAIREKLQCTQGKDYSDALDILIESSKEHGKEMTMQELKDGTLELIFAAYATTASASTSLIMQLLKHPAVLEKLREELRAKGLLHSGGCPCEGTLRLDTLSGLHYLDCVIKEVMRLFTPVSGGYRTVLQTFELDGFQIPKGWSVMYSIRDTHDTAPVFKDVNVFDPDRFGQARSEDKDGRFHYLPFGGGVRTCLGKHLAKLFLKVLAVELASTSRFELATRTFPRITLVPVLHPVDGLSVKFFGLDSNQNKILPETEAMLSATV</sequence>
<reference key="1">
    <citation type="journal article" date="2009" name="Genome Biol.">
        <title>A whole-genome assembly of the domestic cow, Bos taurus.</title>
        <authorList>
            <person name="Zimin A.V."/>
            <person name="Delcher A.L."/>
            <person name="Florea L."/>
            <person name="Kelley D.R."/>
            <person name="Schatz M.C."/>
            <person name="Puiu D."/>
            <person name="Hanrahan F."/>
            <person name="Pertea G."/>
            <person name="Van Tassell C.P."/>
            <person name="Sonstegard T.S."/>
            <person name="Marcais G."/>
            <person name="Roberts M."/>
            <person name="Subramanian P."/>
            <person name="Yorke J.A."/>
            <person name="Salzberg S.L."/>
        </authorList>
    </citation>
    <scope>NUCLEOTIDE SEQUENCE [LARGE SCALE GENOMIC DNA]</scope>
    <source>
        <strain>Hereford</strain>
    </source>
</reference>